<dbReference type="EC" id="3.4.21.-"/>
<dbReference type="EMBL" id="D67079">
    <property type="protein sequence ID" value="BAA19977.1"/>
    <property type="molecule type" value="mRNA"/>
</dbReference>
<dbReference type="SMR" id="O13057"/>
<dbReference type="GlyCosmos" id="O13057">
    <property type="glycosylation" value="2 sites, No reported glycans"/>
</dbReference>
<dbReference type="GO" id="GO:0005576">
    <property type="term" value="C:extracellular region"/>
    <property type="evidence" value="ECO:0007669"/>
    <property type="project" value="UniProtKB-SubCell"/>
</dbReference>
<dbReference type="GO" id="GO:0030141">
    <property type="term" value="C:secretory granule"/>
    <property type="evidence" value="ECO:0007669"/>
    <property type="project" value="TreeGrafter"/>
</dbReference>
<dbReference type="GO" id="GO:0004252">
    <property type="term" value="F:serine-type endopeptidase activity"/>
    <property type="evidence" value="ECO:0007669"/>
    <property type="project" value="InterPro"/>
</dbReference>
<dbReference type="GO" id="GO:0090729">
    <property type="term" value="F:toxin activity"/>
    <property type="evidence" value="ECO:0007669"/>
    <property type="project" value="UniProtKB-KW"/>
</dbReference>
<dbReference type="GO" id="GO:0006508">
    <property type="term" value="P:proteolysis"/>
    <property type="evidence" value="ECO:0007669"/>
    <property type="project" value="UniProtKB-KW"/>
</dbReference>
<dbReference type="CDD" id="cd00190">
    <property type="entry name" value="Tryp_SPc"/>
    <property type="match status" value="1"/>
</dbReference>
<dbReference type="FunFam" id="2.40.10.10:FF:000158">
    <property type="entry name" value="Thrombin-like enzyme saxthrombin"/>
    <property type="match status" value="1"/>
</dbReference>
<dbReference type="FunFam" id="2.40.10.10:FF:000153">
    <property type="entry name" value="Venom plasminogen activator TSV-PA"/>
    <property type="match status" value="1"/>
</dbReference>
<dbReference type="Gene3D" id="2.40.10.10">
    <property type="entry name" value="Trypsin-like serine proteases"/>
    <property type="match status" value="2"/>
</dbReference>
<dbReference type="InterPro" id="IPR009003">
    <property type="entry name" value="Peptidase_S1_PA"/>
</dbReference>
<dbReference type="InterPro" id="IPR043504">
    <property type="entry name" value="Peptidase_S1_PA_chymotrypsin"/>
</dbReference>
<dbReference type="InterPro" id="IPR001314">
    <property type="entry name" value="Peptidase_S1A"/>
</dbReference>
<dbReference type="InterPro" id="IPR001254">
    <property type="entry name" value="Trypsin_dom"/>
</dbReference>
<dbReference type="PANTHER" id="PTHR24271:SF47">
    <property type="entry name" value="KALLIKREIN-1"/>
    <property type="match status" value="1"/>
</dbReference>
<dbReference type="PANTHER" id="PTHR24271">
    <property type="entry name" value="KALLIKREIN-RELATED"/>
    <property type="match status" value="1"/>
</dbReference>
<dbReference type="Pfam" id="PF00089">
    <property type="entry name" value="Trypsin"/>
    <property type="match status" value="1"/>
</dbReference>
<dbReference type="PRINTS" id="PR00722">
    <property type="entry name" value="CHYMOTRYPSIN"/>
</dbReference>
<dbReference type="SMART" id="SM00020">
    <property type="entry name" value="Tryp_SPc"/>
    <property type="match status" value="1"/>
</dbReference>
<dbReference type="SUPFAM" id="SSF50494">
    <property type="entry name" value="Trypsin-like serine proteases"/>
    <property type="match status" value="1"/>
</dbReference>
<dbReference type="PROSITE" id="PS50240">
    <property type="entry name" value="TRYPSIN_DOM"/>
    <property type="match status" value="1"/>
</dbReference>
<sequence length="260" mass="28641">MVLIRVLANLLILQLFYAQKSSELIIGGDECNINEHRFLVALYTFRSRRLHCGGILINQEWVLSAARCNRKNIRIQLGMHSTNVINEDVQTRVPKEKFFCLSSKTHTRWNKDIMLIRLNSPVNNSTHIAPVSLPSNPPSLGSVCRVMGWGTISATKETHPDVPHCANINILDYSVCRAAYARLPATSRTLCAGILEGGKDSCKADSGGPLICNGEIQGIVSRGGHSCGQPRKPGLYTKVFDHLDWIKSIIAGNKDAICPP</sequence>
<evidence type="ECO:0000250" key="1"/>
<evidence type="ECO:0000255" key="2"/>
<evidence type="ECO:0000255" key="3">
    <source>
        <dbReference type="PROSITE-ProRule" id="PRU00274"/>
    </source>
</evidence>
<evidence type="ECO:0000305" key="4"/>
<proteinExistence type="evidence at transcript level"/>
<keyword id="KW-1015">Disulfide bond</keyword>
<keyword id="KW-0325">Glycoprotein</keyword>
<keyword id="KW-1199">Hemostasis impairing toxin</keyword>
<keyword id="KW-0378">Hydrolase</keyword>
<keyword id="KW-0645">Protease</keyword>
<keyword id="KW-0964">Secreted</keyword>
<keyword id="KW-0720">Serine protease</keyword>
<keyword id="KW-0732">Signal</keyword>
<keyword id="KW-0800">Toxin</keyword>
<keyword id="KW-0865">Zymogen</keyword>
<protein>
    <recommendedName>
        <fullName>Snake venom serine protease 2</fullName>
        <shortName>SVSP 2</shortName>
        <ecNumber>3.4.21.-</ecNumber>
    </recommendedName>
</protein>
<reference key="1">
    <citation type="journal article" date="1996" name="FEBS Lett.">
        <title>Accelerated evolution of crotalinae snake venom gland serine proteases.</title>
        <authorList>
            <person name="Deshimaru M."/>
            <person name="Ogawa T."/>
            <person name="Nakashima K."/>
            <person name="Nobuhisa I."/>
            <person name="Chijiwa T."/>
            <person name="Shimohigashi Y."/>
            <person name="Fukumaki Y."/>
            <person name="Niwa M."/>
            <person name="Yamashina I."/>
            <person name="Hattori S."/>
            <person name="Ohno M."/>
        </authorList>
    </citation>
    <scope>NUCLEOTIDE SEQUENCE [MRNA]</scope>
    <source>
        <tissue>Venom gland</tissue>
    </source>
</reference>
<gene>
    <name type="primary">TLF2</name>
</gene>
<comment type="function">
    <text evidence="1">Snake venom serine protease that may act in the hemostasis system of the prey.</text>
</comment>
<comment type="subunit">
    <text evidence="1">Monomer.</text>
</comment>
<comment type="subcellular location">
    <subcellularLocation>
        <location evidence="1">Secreted</location>
    </subcellularLocation>
</comment>
<comment type="tissue specificity">
    <text>Expressed by the venom gland.</text>
</comment>
<comment type="similarity">
    <text evidence="3">Belongs to the peptidase S1 family. Snake venom subfamily.</text>
</comment>
<comment type="caution">
    <text evidence="4">Arg-67 is present instead of the conserved His which is expected to be an active site residue.</text>
</comment>
<feature type="signal peptide" evidence="1">
    <location>
        <begin position="1"/>
        <end position="18"/>
    </location>
</feature>
<feature type="propeptide" id="PRO_0000028387" evidence="1">
    <location>
        <begin position="19"/>
        <end position="24"/>
    </location>
</feature>
<feature type="chain" id="PRO_0000028388" description="Snake venom serine protease 2">
    <location>
        <begin position="25"/>
        <end position="260"/>
    </location>
</feature>
<feature type="domain" description="Peptidase S1" evidence="3">
    <location>
        <begin position="25"/>
        <end position="251"/>
    </location>
</feature>
<feature type="glycosylation site" description="N-linked (GlcNAc...) asparagine" evidence="2">
    <location>
        <position position="123"/>
    </location>
</feature>
<feature type="glycosylation site" description="N-linked (GlcNAc...) asparagine" evidence="2">
    <location>
        <position position="124"/>
    </location>
</feature>
<feature type="disulfide bond" evidence="3">
    <location>
        <begin position="31"/>
        <end position="165"/>
    </location>
</feature>
<feature type="disulfide bond" evidence="3">
    <location>
        <begin position="52"/>
        <end position="68"/>
    </location>
</feature>
<feature type="disulfide bond" evidence="3">
    <location>
        <begin position="100"/>
        <end position="258"/>
    </location>
</feature>
<feature type="disulfide bond" evidence="3">
    <location>
        <begin position="144"/>
        <end position="212"/>
    </location>
</feature>
<feature type="disulfide bond" evidence="3">
    <location>
        <begin position="176"/>
        <end position="191"/>
    </location>
</feature>
<feature type="disulfide bond" evidence="3">
    <location>
        <begin position="202"/>
        <end position="227"/>
    </location>
</feature>
<accession>O13057</accession>
<organism>
    <name type="scientific">Protobothrops flavoviridis</name>
    <name type="common">Habu</name>
    <name type="synonym">Trimeresurus flavoviridis</name>
    <dbReference type="NCBI Taxonomy" id="88087"/>
    <lineage>
        <taxon>Eukaryota</taxon>
        <taxon>Metazoa</taxon>
        <taxon>Chordata</taxon>
        <taxon>Craniata</taxon>
        <taxon>Vertebrata</taxon>
        <taxon>Euteleostomi</taxon>
        <taxon>Lepidosauria</taxon>
        <taxon>Squamata</taxon>
        <taxon>Bifurcata</taxon>
        <taxon>Unidentata</taxon>
        <taxon>Episquamata</taxon>
        <taxon>Toxicofera</taxon>
        <taxon>Serpentes</taxon>
        <taxon>Colubroidea</taxon>
        <taxon>Viperidae</taxon>
        <taxon>Crotalinae</taxon>
        <taxon>Protobothrops</taxon>
    </lineage>
</organism>
<name>VSP2_PROFL</name>